<proteinExistence type="evidence at transcript level"/>
<sequence length="205" mass="23745">MEFLWAPLLGLCCSLAAADRHTVFWNSSEPKFWNEDYTVHVRLNDYLDIICPHYEDDSVAEAAMERYTLYLVEREQYQLCQPQSKDQVRWQCNQPNARHGPEKLSEKFQRFTPFTLGKEFKEGHSYYYISKPIHHQEDQCLKLKVTVSGKITHSPQAHANPQEKRLPADDPEVQVLHSIGHSAAPRLSPLAWAVLLLPFLLLQTS</sequence>
<keyword id="KW-0037">Angiogenesis</keyword>
<keyword id="KW-1003">Cell membrane</keyword>
<keyword id="KW-1015">Disulfide bond</keyword>
<keyword id="KW-0325">Glycoprotein</keyword>
<keyword id="KW-0336">GPI-anchor</keyword>
<keyword id="KW-0449">Lipoprotein</keyword>
<keyword id="KW-0472">Membrane</keyword>
<keyword id="KW-1185">Reference proteome</keyword>
<keyword id="KW-0964">Secreted</keyword>
<keyword id="KW-0732">Signal</keyword>
<keyword id="KW-0043">Tumor suppressor</keyword>
<organism>
    <name type="scientific">Sus scrofa</name>
    <name type="common">Pig</name>
    <dbReference type="NCBI Taxonomy" id="9823"/>
    <lineage>
        <taxon>Eukaryota</taxon>
        <taxon>Metazoa</taxon>
        <taxon>Chordata</taxon>
        <taxon>Craniata</taxon>
        <taxon>Vertebrata</taxon>
        <taxon>Euteleostomi</taxon>
        <taxon>Mammalia</taxon>
        <taxon>Eutheria</taxon>
        <taxon>Laurasiatheria</taxon>
        <taxon>Artiodactyla</taxon>
        <taxon>Suina</taxon>
        <taxon>Suidae</taxon>
        <taxon>Sus</taxon>
    </lineage>
</organism>
<feature type="signal peptide" evidence="1">
    <location>
        <begin position="1"/>
        <end position="18"/>
    </location>
</feature>
<feature type="chain" id="PRO_0000288608" description="Ephrin-A1">
    <location>
        <begin position="19"/>
        <end position="182"/>
    </location>
</feature>
<feature type="chain" id="PRO_0000389632" description="Ephrin-A1, secreted form">
    <location>
        <begin position="19"/>
        <end status="unknown"/>
    </location>
</feature>
<feature type="propeptide" id="PRO_0000288609" description="Removed in mature form" evidence="3">
    <location>
        <begin position="183"/>
        <end position="205"/>
    </location>
</feature>
<feature type="domain" description="Ephrin RBD" evidence="4">
    <location>
        <begin position="19"/>
        <end position="151"/>
    </location>
</feature>
<feature type="lipid moiety-binding region" description="GPI-anchor amidated serine" evidence="3">
    <location>
        <position position="182"/>
    </location>
</feature>
<feature type="glycosylation site" description="N-linked (GlcNAc...) asparagine" evidence="3">
    <location>
        <position position="26"/>
    </location>
</feature>
<feature type="disulfide bond" evidence="4">
    <location>
        <begin position="51"/>
        <end position="92"/>
    </location>
</feature>
<feature type="disulfide bond" evidence="4">
    <location>
        <begin position="80"/>
        <end position="140"/>
    </location>
</feature>
<comment type="function">
    <text evidence="1">Cell surface GPI-bound ligand for Eph receptors, a family of receptor tyrosine kinases which are crucial for migration, repulsion and adhesion during neuronal, vascular and epithelial development. Binds promiscuously Eph receptors residing on adjacent cells, leading to contact-dependent bidirectional signaling into neighboring cells. Plays an important role in angiogenesis and tumor neovascularization. The recruitment of VAV2, VAV3 and PI3-kinase p85 subunit by phosphorylated EPHA2 is critical for EFNA1-induced RAC1 GTPase activation and vascular endothelial cell migration and assembly. Exerts anti-oncogenic effects in tumor cells through activation and down-regulation of EPHA2. Activates EPHA2 by inducing tyrosine phosphorylation which leads to its internalization and degradation. Acts as a negative regulator in the tumorigenesis of gliomas by down-regulating EPHA2 and FAK. Can evoke collapse of embryonic neuronal growth cone and regulates dendritic spine morphogenesis (By similarity).</text>
</comment>
<comment type="subunit">
    <text evidence="1">Monomer. Homodimer. Forms heterodimers with EPHA2. Binds to the receptor tyrosine kinases EPHA2, EPHA3, EPHA4, EPHA5, EPHA6 and EPHA7. Also binds with low affinity to EPHA1 (By similarity).</text>
</comment>
<comment type="subcellular location">
    <subcellularLocation>
        <location evidence="2">Cell membrane</location>
        <topology evidence="2">Lipid-anchor</topology>
        <topology evidence="2">GPI-anchor</topology>
    </subcellularLocation>
</comment>
<comment type="subcellular location">
    <molecule>Ephrin-A1, secreted form</molecule>
    <subcellularLocation>
        <location evidence="2">Secreted</location>
    </subcellularLocation>
</comment>
<comment type="PTM">
    <text evidence="1">Undergoes proteolysis by a metalloprotease to give rise to a soluble monomeric form.</text>
</comment>
<comment type="PTM">
    <text evidence="2">N-Glycosylation is required for binding to EPHA2 receptor and inducing its internalization.</text>
</comment>
<comment type="similarity">
    <text evidence="4">Belongs to the ephrin family.</text>
</comment>
<reference key="1">
    <citation type="submission" date="2006-08" db="EMBL/GenBank/DDBJ databases">
        <authorList>
            <person name="Liu G.Y."/>
        </authorList>
    </citation>
    <scope>NUCLEOTIDE SEQUENCE [LARGE SCALE MRNA]</scope>
</reference>
<gene>
    <name type="primary">EFNA1</name>
</gene>
<evidence type="ECO:0000250" key="1"/>
<evidence type="ECO:0000250" key="2">
    <source>
        <dbReference type="UniProtKB" id="P20827"/>
    </source>
</evidence>
<evidence type="ECO:0000255" key="3"/>
<evidence type="ECO:0000255" key="4">
    <source>
        <dbReference type="PROSITE-ProRule" id="PRU00884"/>
    </source>
</evidence>
<accession>Q06AS9</accession>
<name>EFNA1_PIG</name>
<protein>
    <recommendedName>
        <fullName>Ephrin-A1</fullName>
    </recommendedName>
    <component>
        <recommendedName>
            <fullName>Ephrin-A1, secreted form</fullName>
        </recommendedName>
    </component>
</protein>
<dbReference type="EMBL" id="DQ917646">
    <property type="protein sequence ID" value="ABI97191.1"/>
    <property type="molecule type" value="mRNA"/>
</dbReference>
<dbReference type="RefSeq" id="NP_001116582.1">
    <property type="nucleotide sequence ID" value="NM_001123110.1"/>
</dbReference>
<dbReference type="SMR" id="Q06AS9"/>
<dbReference type="FunCoup" id="Q06AS9">
    <property type="interactions" value="559"/>
</dbReference>
<dbReference type="STRING" id="9823.ENSSSCP00000006959"/>
<dbReference type="GlyCosmos" id="Q06AS9">
    <property type="glycosylation" value="1 site, No reported glycans"/>
</dbReference>
<dbReference type="GlyGen" id="Q06AS9">
    <property type="glycosylation" value="1 site"/>
</dbReference>
<dbReference type="PaxDb" id="9823-ENSSSCP00000006959"/>
<dbReference type="PeptideAtlas" id="Q06AS9"/>
<dbReference type="GeneID" id="100144501"/>
<dbReference type="KEGG" id="ssc:100144501"/>
<dbReference type="CTD" id="1942"/>
<dbReference type="eggNOG" id="KOG3858">
    <property type="taxonomic scope" value="Eukaryota"/>
</dbReference>
<dbReference type="InParanoid" id="Q06AS9"/>
<dbReference type="OrthoDB" id="8774972at2759"/>
<dbReference type="Proteomes" id="UP000008227">
    <property type="component" value="Unplaced"/>
</dbReference>
<dbReference type="Proteomes" id="UP000314985">
    <property type="component" value="Unplaced"/>
</dbReference>
<dbReference type="Proteomes" id="UP000694570">
    <property type="component" value="Unplaced"/>
</dbReference>
<dbReference type="Proteomes" id="UP000694571">
    <property type="component" value="Unplaced"/>
</dbReference>
<dbReference type="Proteomes" id="UP000694720">
    <property type="component" value="Unplaced"/>
</dbReference>
<dbReference type="Proteomes" id="UP000694722">
    <property type="component" value="Unplaced"/>
</dbReference>
<dbReference type="Proteomes" id="UP000694723">
    <property type="component" value="Unplaced"/>
</dbReference>
<dbReference type="Proteomes" id="UP000694724">
    <property type="component" value="Unplaced"/>
</dbReference>
<dbReference type="Proteomes" id="UP000694725">
    <property type="component" value="Unplaced"/>
</dbReference>
<dbReference type="Proteomes" id="UP000694726">
    <property type="component" value="Unplaced"/>
</dbReference>
<dbReference type="Proteomes" id="UP000694727">
    <property type="component" value="Unplaced"/>
</dbReference>
<dbReference type="Proteomes" id="UP000694728">
    <property type="component" value="Unplaced"/>
</dbReference>
<dbReference type="GO" id="GO:0005576">
    <property type="term" value="C:extracellular region"/>
    <property type="evidence" value="ECO:0007669"/>
    <property type="project" value="UniProtKB-SubCell"/>
</dbReference>
<dbReference type="GO" id="GO:0005886">
    <property type="term" value="C:plasma membrane"/>
    <property type="evidence" value="ECO:0000318"/>
    <property type="project" value="GO_Central"/>
</dbReference>
<dbReference type="GO" id="GO:0098552">
    <property type="term" value="C:side of membrane"/>
    <property type="evidence" value="ECO:0007669"/>
    <property type="project" value="UniProtKB-KW"/>
</dbReference>
<dbReference type="GO" id="GO:0046875">
    <property type="term" value="F:ephrin receptor binding"/>
    <property type="evidence" value="ECO:0000318"/>
    <property type="project" value="GO_Central"/>
</dbReference>
<dbReference type="GO" id="GO:0001525">
    <property type="term" value="P:angiogenesis"/>
    <property type="evidence" value="ECO:0007669"/>
    <property type="project" value="UniProtKB-KW"/>
</dbReference>
<dbReference type="GO" id="GO:0007411">
    <property type="term" value="P:axon guidance"/>
    <property type="evidence" value="ECO:0000318"/>
    <property type="project" value="GO_Central"/>
</dbReference>
<dbReference type="GO" id="GO:0048013">
    <property type="term" value="P:ephrin receptor signaling pathway"/>
    <property type="evidence" value="ECO:0000250"/>
    <property type="project" value="UniProtKB"/>
</dbReference>
<dbReference type="GO" id="GO:0061002">
    <property type="term" value="P:negative regulation of dendritic spine morphogenesis"/>
    <property type="evidence" value="ECO:0000250"/>
    <property type="project" value="UniProtKB"/>
</dbReference>
<dbReference type="GO" id="GO:0050730">
    <property type="term" value="P:regulation of peptidyl-tyrosine phosphorylation"/>
    <property type="evidence" value="ECO:0000250"/>
    <property type="project" value="UniProtKB"/>
</dbReference>
<dbReference type="CDD" id="cd10425">
    <property type="entry name" value="Ephrin-A_Ectodomain"/>
    <property type="match status" value="1"/>
</dbReference>
<dbReference type="FunFam" id="2.60.40.420:FF:000017">
    <property type="entry name" value="ephrin-A1"/>
    <property type="match status" value="1"/>
</dbReference>
<dbReference type="Gene3D" id="2.60.40.420">
    <property type="entry name" value="Cupredoxins - blue copper proteins"/>
    <property type="match status" value="1"/>
</dbReference>
<dbReference type="InterPro" id="IPR008972">
    <property type="entry name" value="Cupredoxin"/>
</dbReference>
<dbReference type="InterPro" id="IPR031328">
    <property type="entry name" value="Ephrin"/>
</dbReference>
<dbReference type="InterPro" id="IPR034252">
    <property type="entry name" value="Ephrin-A_Ecto"/>
</dbReference>
<dbReference type="InterPro" id="IPR019765">
    <property type="entry name" value="Ephrin_CS"/>
</dbReference>
<dbReference type="InterPro" id="IPR001799">
    <property type="entry name" value="Ephrin_RBD"/>
</dbReference>
<dbReference type="PANTHER" id="PTHR11304">
    <property type="entry name" value="EPHRIN"/>
    <property type="match status" value="1"/>
</dbReference>
<dbReference type="PANTHER" id="PTHR11304:SF19">
    <property type="entry name" value="EPHRIN-A1"/>
    <property type="match status" value="1"/>
</dbReference>
<dbReference type="Pfam" id="PF00812">
    <property type="entry name" value="Ephrin"/>
    <property type="match status" value="1"/>
</dbReference>
<dbReference type="PRINTS" id="PR01347">
    <property type="entry name" value="EPHRIN"/>
</dbReference>
<dbReference type="SUPFAM" id="SSF49503">
    <property type="entry name" value="Cupredoxins"/>
    <property type="match status" value="1"/>
</dbReference>
<dbReference type="PROSITE" id="PS01299">
    <property type="entry name" value="EPHRIN_RBD_1"/>
    <property type="match status" value="1"/>
</dbReference>
<dbReference type="PROSITE" id="PS51551">
    <property type="entry name" value="EPHRIN_RBD_2"/>
    <property type="match status" value="1"/>
</dbReference>